<sequence length="600" mass="64391">MSTLTRFSVRPLATMTRHLADVASGRAEPDLVIKGARVLSTYSERILPDREVWISGGRIAAVKPAGSYRGSAATIYDAAGGLIAPGLVDPHIHIESSMVTACSYAEAALLNGTTTIFCDSHEIGNVMDVAGVEAMLEDARQAPSSIFLTVPSTVPATSPELETAGGDLTAEKIAALFDKWPEAVALGEKMDFVQVAMGDERSHAILAAALERGRPVSGHVYGREFVAAYAASGVTDTHEAIDREIADDLLEAGIWLFLRGGPPTTPWHSLPQAIKTITELGASHKRIAVCTDDRDADDLLLFGLDWVTREAMKAGMKPEQAWAMGSLHGATRFGLEGDIGGLGGGRRADLVLLDDGFKPVNTWYGGELVVENRKITPLLDTALSNRYRYPEAAYHTVKLPKAVKLTPELPTARVVAHTIRTELPGITLGHERITLEPSNHWQDHFDRHGLCFVAVVERHGKSAGNVAHGLLSNFNLKRGAVASSVGHDSHNIIVAGTNEADMQVALRAIEEAQGGVCVVMDGKVTAMVPLPIAGLLSDKRVTEVAEEVKALKVEWEKAGCSIPYMGFNLIPLSVIPEIRITDKGLVLVPEMEIVQLFEAA</sequence>
<protein>
    <recommendedName>
        <fullName evidence="1">Adenine deaminase</fullName>
        <shortName evidence="1">Adenase</shortName>
        <shortName evidence="1">Adenine aminase</shortName>
        <ecNumber evidence="1">3.5.4.2</ecNumber>
    </recommendedName>
</protein>
<evidence type="ECO:0000255" key="1">
    <source>
        <dbReference type="HAMAP-Rule" id="MF_01518"/>
    </source>
</evidence>
<comment type="catalytic activity">
    <reaction evidence="1">
        <text>adenine + H2O + H(+) = hypoxanthine + NH4(+)</text>
        <dbReference type="Rhea" id="RHEA:23688"/>
        <dbReference type="ChEBI" id="CHEBI:15377"/>
        <dbReference type="ChEBI" id="CHEBI:15378"/>
        <dbReference type="ChEBI" id="CHEBI:16708"/>
        <dbReference type="ChEBI" id="CHEBI:17368"/>
        <dbReference type="ChEBI" id="CHEBI:28938"/>
        <dbReference type="EC" id="3.5.4.2"/>
    </reaction>
</comment>
<comment type="cofactor">
    <cofactor evidence="1">
        <name>Mn(2+)</name>
        <dbReference type="ChEBI" id="CHEBI:29035"/>
    </cofactor>
</comment>
<comment type="similarity">
    <text evidence="1">Belongs to the metallo-dependent hydrolases superfamily. Adenine deaminase family.</text>
</comment>
<proteinExistence type="inferred from homology"/>
<gene>
    <name evidence="1" type="primary">ade</name>
    <name type="ordered locus">Meso_1082</name>
</gene>
<reference key="1">
    <citation type="submission" date="2006-06" db="EMBL/GenBank/DDBJ databases">
        <title>Complete sequence of chromosome of Mesorhizobium sp. BNC1.</title>
        <authorList>
            <consortium name="US DOE Joint Genome Institute"/>
            <person name="Copeland A."/>
            <person name="Lucas S."/>
            <person name="Lapidus A."/>
            <person name="Barry K."/>
            <person name="Detter J.C."/>
            <person name="Glavina del Rio T."/>
            <person name="Hammon N."/>
            <person name="Israni S."/>
            <person name="Dalin E."/>
            <person name="Tice H."/>
            <person name="Pitluck S."/>
            <person name="Chertkov O."/>
            <person name="Brettin T."/>
            <person name="Bruce D."/>
            <person name="Han C."/>
            <person name="Tapia R."/>
            <person name="Gilna P."/>
            <person name="Schmutz J."/>
            <person name="Larimer F."/>
            <person name="Land M."/>
            <person name="Hauser L."/>
            <person name="Kyrpides N."/>
            <person name="Mikhailova N."/>
            <person name="Richardson P."/>
        </authorList>
    </citation>
    <scope>NUCLEOTIDE SEQUENCE [LARGE SCALE GENOMIC DNA]</scope>
    <source>
        <strain>BNC1</strain>
    </source>
</reference>
<feature type="chain" id="PRO_0000296728" description="Adenine deaminase">
    <location>
        <begin position="1"/>
        <end position="600"/>
    </location>
</feature>
<organism>
    <name type="scientific">Chelativorans sp. (strain BNC1)</name>
    <dbReference type="NCBI Taxonomy" id="266779"/>
    <lineage>
        <taxon>Bacteria</taxon>
        <taxon>Pseudomonadati</taxon>
        <taxon>Pseudomonadota</taxon>
        <taxon>Alphaproteobacteria</taxon>
        <taxon>Hyphomicrobiales</taxon>
        <taxon>Phyllobacteriaceae</taxon>
        <taxon>Chelativorans</taxon>
    </lineage>
</organism>
<accession>Q11JE6</accession>
<keyword id="KW-0378">Hydrolase</keyword>
<keyword id="KW-0464">Manganese</keyword>
<dbReference type="EC" id="3.5.4.2" evidence="1"/>
<dbReference type="EMBL" id="CP000390">
    <property type="protein sequence ID" value="ABG62479.1"/>
    <property type="molecule type" value="Genomic_DNA"/>
</dbReference>
<dbReference type="SMR" id="Q11JE6"/>
<dbReference type="STRING" id="266779.Meso_1082"/>
<dbReference type="KEGG" id="mes:Meso_1082"/>
<dbReference type="eggNOG" id="COG1001">
    <property type="taxonomic scope" value="Bacteria"/>
</dbReference>
<dbReference type="HOGENOM" id="CLU_027935_0_0_5"/>
<dbReference type="OrthoDB" id="9775607at2"/>
<dbReference type="GO" id="GO:0000034">
    <property type="term" value="F:adenine deaminase activity"/>
    <property type="evidence" value="ECO:0007669"/>
    <property type="project" value="UniProtKB-UniRule"/>
</dbReference>
<dbReference type="GO" id="GO:0006146">
    <property type="term" value="P:adenine catabolic process"/>
    <property type="evidence" value="ECO:0007669"/>
    <property type="project" value="InterPro"/>
</dbReference>
<dbReference type="FunFam" id="3.20.20.140:FF:000061">
    <property type="entry name" value="Adenine deaminase"/>
    <property type="match status" value="1"/>
</dbReference>
<dbReference type="Gene3D" id="3.20.20.140">
    <property type="entry name" value="Metal-dependent hydrolases"/>
    <property type="match status" value="1"/>
</dbReference>
<dbReference type="Gene3D" id="2.30.40.10">
    <property type="entry name" value="Urease, subunit C, domain 1"/>
    <property type="match status" value="1"/>
</dbReference>
<dbReference type="HAMAP" id="MF_01518">
    <property type="entry name" value="Adenine_deamin"/>
    <property type="match status" value="1"/>
</dbReference>
<dbReference type="InterPro" id="IPR006679">
    <property type="entry name" value="Adenine_deam"/>
</dbReference>
<dbReference type="InterPro" id="IPR026912">
    <property type="entry name" value="Adenine_deam_C"/>
</dbReference>
<dbReference type="InterPro" id="IPR006680">
    <property type="entry name" value="Amidohydro-rel"/>
</dbReference>
<dbReference type="InterPro" id="IPR011059">
    <property type="entry name" value="Metal-dep_hydrolase_composite"/>
</dbReference>
<dbReference type="InterPro" id="IPR032466">
    <property type="entry name" value="Metal_Hydrolase"/>
</dbReference>
<dbReference type="PANTHER" id="PTHR11113:SF2">
    <property type="entry name" value="ADENINE DEAMINASE"/>
    <property type="match status" value="1"/>
</dbReference>
<dbReference type="PANTHER" id="PTHR11113">
    <property type="entry name" value="N-ACETYLGLUCOSAMINE-6-PHOSPHATE DEACETYLASE"/>
    <property type="match status" value="1"/>
</dbReference>
<dbReference type="Pfam" id="PF13382">
    <property type="entry name" value="Adenine_deam_C"/>
    <property type="match status" value="1"/>
</dbReference>
<dbReference type="Pfam" id="PF01979">
    <property type="entry name" value="Amidohydro_1"/>
    <property type="match status" value="1"/>
</dbReference>
<dbReference type="SUPFAM" id="SSF51338">
    <property type="entry name" value="Composite domain of metallo-dependent hydrolases"/>
    <property type="match status" value="1"/>
</dbReference>
<dbReference type="SUPFAM" id="SSF51556">
    <property type="entry name" value="Metallo-dependent hydrolases"/>
    <property type="match status" value="1"/>
</dbReference>
<name>ADEC_CHESB</name>